<name>NAGB_BIFLD</name>
<accession>B3DQQ9</accession>
<evidence type="ECO:0000255" key="1">
    <source>
        <dbReference type="HAMAP-Rule" id="MF_01241"/>
    </source>
</evidence>
<organism>
    <name type="scientific">Bifidobacterium longum (strain DJO10A)</name>
    <dbReference type="NCBI Taxonomy" id="205913"/>
    <lineage>
        <taxon>Bacteria</taxon>
        <taxon>Bacillati</taxon>
        <taxon>Actinomycetota</taxon>
        <taxon>Actinomycetes</taxon>
        <taxon>Bifidobacteriales</taxon>
        <taxon>Bifidobacteriaceae</taxon>
        <taxon>Bifidobacterium</taxon>
    </lineage>
</organism>
<dbReference type="EC" id="3.5.99.6" evidence="1"/>
<dbReference type="EMBL" id="CP000605">
    <property type="protein sequence ID" value="ACD97655.1"/>
    <property type="molecule type" value="Genomic_DNA"/>
</dbReference>
<dbReference type="RefSeq" id="WP_007057381.1">
    <property type="nucleotide sequence ID" value="NZ_AABM02000003.1"/>
</dbReference>
<dbReference type="SMR" id="B3DQQ9"/>
<dbReference type="KEGG" id="blj:BLD_0209"/>
<dbReference type="HOGENOM" id="CLU_049611_0_1_11"/>
<dbReference type="UniPathway" id="UPA00629">
    <property type="reaction ID" value="UER00684"/>
</dbReference>
<dbReference type="Proteomes" id="UP000002419">
    <property type="component" value="Chromosome"/>
</dbReference>
<dbReference type="GO" id="GO:0005737">
    <property type="term" value="C:cytoplasm"/>
    <property type="evidence" value="ECO:0007669"/>
    <property type="project" value="TreeGrafter"/>
</dbReference>
<dbReference type="GO" id="GO:0004342">
    <property type="term" value="F:glucosamine-6-phosphate deaminase activity"/>
    <property type="evidence" value="ECO:0007669"/>
    <property type="project" value="UniProtKB-UniRule"/>
</dbReference>
<dbReference type="GO" id="GO:0042802">
    <property type="term" value="F:identical protein binding"/>
    <property type="evidence" value="ECO:0007669"/>
    <property type="project" value="TreeGrafter"/>
</dbReference>
<dbReference type="GO" id="GO:0005975">
    <property type="term" value="P:carbohydrate metabolic process"/>
    <property type="evidence" value="ECO:0007669"/>
    <property type="project" value="InterPro"/>
</dbReference>
<dbReference type="GO" id="GO:0006043">
    <property type="term" value="P:glucosamine catabolic process"/>
    <property type="evidence" value="ECO:0007669"/>
    <property type="project" value="TreeGrafter"/>
</dbReference>
<dbReference type="GO" id="GO:0006046">
    <property type="term" value="P:N-acetylglucosamine catabolic process"/>
    <property type="evidence" value="ECO:0007669"/>
    <property type="project" value="TreeGrafter"/>
</dbReference>
<dbReference type="GO" id="GO:0019262">
    <property type="term" value="P:N-acetylneuraminate catabolic process"/>
    <property type="evidence" value="ECO:0007669"/>
    <property type="project" value="UniProtKB-UniRule"/>
</dbReference>
<dbReference type="CDD" id="cd01399">
    <property type="entry name" value="GlcN6P_deaminase"/>
    <property type="match status" value="1"/>
</dbReference>
<dbReference type="Gene3D" id="3.40.50.1360">
    <property type="match status" value="1"/>
</dbReference>
<dbReference type="HAMAP" id="MF_01241">
    <property type="entry name" value="GlcN6P_deamin"/>
    <property type="match status" value="1"/>
</dbReference>
<dbReference type="InterPro" id="IPR006148">
    <property type="entry name" value="Glc/Gal-6P_isomerase"/>
</dbReference>
<dbReference type="InterPro" id="IPR004547">
    <property type="entry name" value="Glucosamine6P_isomerase"/>
</dbReference>
<dbReference type="InterPro" id="IPR018321">
    <property type="entry name" value="Glucosamine6P_isomerase_CS"/>
</dbReference>
<dbReference type="InterPro" id="IPR037171">
    <property type="entry name" value="NagB/RpiA_transferase-like"/>
</dbReference>
<dbReference type="NCBIfam" id="TIGR00502">
    <property type="entry name" value="nagB"/>
    <property type="match status" value="1"/>
</dbReference>
<dbReference type="NCBIfam" id="NF001684">
    <property type="entry name" value="PRK00443.1-4"/>
    <property type="match status" value="1"/>
</dbReference>
<dbReference type="PANTHER" id="PTHR11280">
    <property type="entry name" value="GLUCOSAMINE-6-PHOSPHATE ISOMERASE"/>
    <property type="match status" value="1"/>
</dbReference>
<dbReference type="PANTHER" id="PTHR11280:SF5">
    <property type="entry name" value="GLUCOSAMINE-6-PHOSPHATE ISOMERASE"/>
    <property type="match status" value="1"/>
</dbReference>
<dbReference type="Pfam" id="PF01182">
    <property type="entry name" value="Glucosamine_iso"/>
    <property type="match status" value="1"/>
</dbReference>
<dbReference type="SUPFAM" id="SSF100950">
    <property type="entry name" value="NagB/RpiA/CoA transferase-like"/>
    <property type="match status" value="1"/>
</dbReference>
<dbReference type="PROSITE" id="PS01161">
    <property type="entry name" value="GLC_GALNAC_ISOMERASE"/>
    <property type="match status" value="1"/>
</dbReference>
<comment type="function">
    <text evidence="1">Catalyzes the reversible isomerization-deamination of glucosamine 6-phosphate (GlcN6P) to form fructose 6-phosphate (Fru6P) and ammonium ion.</text>
</comment>
<comment type="catalytic activity">
    <reaction evidence="1">
        <text>alpha-D-glucosamine 6-phosphate + H2O = beta-D-fructose 6-phosphate + NH4(+)</text>
        <dbReference type="Rhea" id="RHEA:12172"/>
        <dbReference type="ChEBI" id="CHEBI:15377"/>
        <dbReference type="ChEBI" id="CHEBI:28938"/>
        <dbReference type="ChEBI" id="CHEBI:57634"/>
        <dbReference type="ChEBI" id="CHEBI:75989"/>
        <dbReference type="EC" id="3.5.99.6"/>
    </reaction>
</comment>
<comment type="pathway">
    <text evidence="1">Amino-sugar metabolism; N-acetylneuraminate degradation; D-fructose 6-phosphate from N-acetylneuraminate: step 5/5.</text>
</comment>
<comment type="similarity">
    <text evidence="1">Belongs to the glucosamine/galactosamine-6-phosphate isomerase family. NagB subfamily.</text>
</comment>
<proteinExistence type="inferred from homology"/>
<reference key="1">
    <citation type="journal article" date="2008" name="BMC Genomics">
        <title>Comparative genomic analysis of the gut bacterium Bifidobacterium longum reveals loci susceptible to deletion during pure culture growth.</title>
        <authorList>
            <person name="Lee J.H."/>
            <person name="Karamychev V.N."/>
            <person name="Kozyavkin S.A."/>
            <person name="Mills D."/>
            <person name="Pavlov A.R."/>
            <person name="Pavlova N.V."/>
            <person name="Polouchine N.N."/>
            <person name="Richardson P.M."/>
            <person name="Shakhova V.V."/>
            <person name="Slesarev A.I."/>
            <person name="Weimer B."/>
            <person name="O'Sullivan D.J."/>
        </authorList>
    </citation>
    <scope>NUCLEOTIDE SEQUENCE [LARGE SCALE GENOMIC DNA]</scope>
    <source>
        <strain>DJO10A</strain>
    </source>
</reference>
<keyword id="KW-0119">Carbohydrate metabolism</keyword>
<keyword id="KW-0378">Hydrolase</keyword>
<feature type="chain" id="PRO_1000139759" description="Glucosamine-6-phosphate deaminase">
    <location>
        <begin position="1"/>
        <end position="270"/>
    </location>
</feature>
<feature type="active site" description="Proton acceptor; for enolization step" evidence="1">
    <location>
        <position position="68"/>
    </location>
</feature>
<feature type="active site" description="For ring-opening step" evidence="1">
    <location>
        <position position="145"/>
    </location>
</feature>
<feature type="active site" description="Proton acceptor; for ring-opening step" evidence="1">
    <location>
        <position position="147"/>
    </location>
</feature>
<feature type="active site" description="For ring-opening step" evidence="1">
    <location>
        <position position="152"/>
    </location>
</feature>
<sequence>MPEIIIVKNEAEAGEIYGRCVADLIKAKPDAVLGLATGSSPLAAYQALAKIVKDEAIDVSGVRGFALDEYIGLPLTHPESYHATIHRTVVEPLGLDPAKVHVPGDVLNGTPLEDGDKIALAGPAYDRAIEAAGGIDVQILGIGTDGHVGFNEPGSSLASGTRVKTLAEQTRIDNARFFDNDINQVPTHCITQGIGTIMKARHLVLLAFGAGKAEAIEETVEGGVSAFCPASALQMHPHATIIVDEEAASRLRHKDYYRYAYTHKPAWQGI</sequence>
<gene>
    <name evidence="1" type="primary">nagB</name>
    <name type="ordered locus">BLD_0209</name>
</gene>
<protein>
    <recommendedName>
        <fullName evidence="1">Glucosamine-6-phosphate deaminase</fullName>
        <ecNumber evidence="1">3.5.99.6</ecNumber>
    </recommendedName>
    <alternativeName>
        <fullName evidence="1">GlcN6P deaminase</fullName>
        <shortName evidence="1">GNPDA</shortName>
    </alternativeName>
    <alternativeName>
        <fullName evidence="1">Glucosamine-6-phosphate isomerase</fullName>
    </alternativeName>
</protein>